<proteinExistence type="inferred from homology"/>
<evidence type="ECO:0000255" key="1">
    <source>
        <dbReference type="HAMAP-Rule" id="MF_00592"/>
    </source>
</evidence>
<accession>B6ENG3</accession>
<keyword id="KW-0963">Cytoplasm</keyword>
<keyword id="KW-0456">Lyase</keyword>
<keyword id="KW-0704">Schiff base</keyword>
<protein>
    <recommendedName>
        <fullName evidence="1">Deoxyribose-phosphate aldolase</fullName>
        <shortName evidence="1">DERA</shortName>
        <ecNumber evidence="1">4.1.2.4</ecNumber>
    </recommendedName>
    <alternativeName>
        <fullName evidence="1">2-deoxy-D-ribose 5-phosphate aldolase</fullName>
    </alternativeName>
    <alternativeName>
        <fullName evidence="1">Phosphodeoxyriboaldolase</fullName>
        <shortName evidence="1">Deoxyriboaldolase</shortName>
    </alternativeName>
</protein>
<name>DEOC_ALISL</name>
<gene>
    <name evidence="1" type="primary">deoC</name>
    <name type="ordered locus">VSAL_I0619</name>
</gene>
<comment type="function">
    <text evidence="1">Catalyzes a reversible aldol reaction between acetaldehyde and D-glyceraldehyde 3-phosphate to generate 2-deoxy-D-ribose 5-phosphate.</text>
</comment>
<comment type="catalytic activity">
    <reaction evidence="1">
        <text>2-deoxy-D-ribose 5-phosphate = D-glyceraldehyde 3-phosphate + acetaldehyde</text>
        <dbReference type="Rhea" id="RHEA:12821"/>
        <dbReference type="ChEBI" id="CHEBI:15343"/>
        <dbReference type="ChEBI" id="CHEBI:59776"/>
        <dbReference type="ChEBI" id="CHEBI:62877"/>
        <dbReference type="EC" id="4.1.2.4"/>
    </reaction>
</comment>
<comment type="pathway">
    <text evidence="1">Carbohydrate degradation; 2-deoxy-D-ribose 1-phosphate degradation; D-glyceraldehyde 3-phosphate and acetaldehyde from 2-deoxy-alpha-D-ribose 1-phosphate: step 2/2.</text>
</comment>
<comment type="subcellular location">
    <subcellularLocation>
        <location evidence="1">Cytoplasm</location>
    </subcellularLocation>
</comment>
<comment type="similarity">
    <text evidence="1">Belongs to the DeoC/FbaB aldolase family. DeoC type 2 subfamily.</text>
</comment>
<dbReference type="EC" id="4.1.2.4" evidence="1"/>
<dbReference type="EMBL" id="FM178379">
    <property type="protein sequence ID" value="CAQ78304.1"/>
    <property type="molecule type" value="Genomic_DNA"/>
</dbReference>
<dbReference type="RefSeq" id="WP_012549427.1">
    <property type="nucleotide sequence ID" value="NC_011312.1"/>
</dbReference>
<dbReference type="SMR" id="B6ENG3"/>
<dbReference type="KEGG" id="vsa:VSAL_I0619"/>
<dbReference type="eggNOG" id="COG0274">
    <property type="taxonomic scope" value="Bacteria"/>
</dbReference>
<dbReference type="HOGENOM" id="CLU_053595_3_1_6"/>
<dbReference type="UniPathway" id="UPA00002">
    <property type="reaction ID" value="UER00468"/>
</dbReference>
<dbReference type="Proteomes" id="UP000001730">
    <property type="component" value="Chromosome 1"/>
</dbReference>
<dbReference type="GO" id="GO:0005737">
    <property type="term" value="C:cytoplasm"/>
    <property type="evidence" value="ECO:0007669"/>
    <property type="project" value="UniProtKB-SubCell"/>
</dbReference>
<dbReference type="GO" id="GO:0004139">
    <property type="term" value="F:deoxyribose-phosphate aldolase activity"/>
    <property type="evidence" value="ECO:0007669"/>
    <property type="project" value="UniProtKB-UniRule"/>
</dbReference>
<dbReference type="GO" id="GO:0006018">
    <property type="term" value="P:2-deoxyribose 1-phosphate catabolic process"/>
    <property type="evidence" value="ECO:0007669"/>
    <property type="project" value="UniProtKB-UniRule"/>
</dbReference>
<dbReference type="GO" id="GO:0016052">
    <property type="term" value="P:carbohydrate catabolic process"/>
    <property type="evidence" value="ECO:0007669"/>
    <property type="project" value="TreeGrafter"/>
</dbReference>
<dbReference type="GO" id="GO:0009264">
    <property type="term" value="P:deoxyribonucleotide catabolic process"/>
    <property type="evidence" value="ECO:0007669"/>
    <property type="project" value="InterPro"/>
</dbReference>
<dbReference type="CDD" id="cd00959">
    <property type="entry name" value="DeoC"/>
    <property type="match status" value="1"/>
</dbReference>
<dbReference type="FunFam" id="3.20.20.70:FF:000034">
    <property type="entry name" value="Deoxyribose-phosphate aldolase"/>
    <property type="match status" value="1"/>
</dbReference>
<dbReference type="Gene3D" id="3.20.20.70">
    <property type="entry name" value="Aldolase class I"/>
    <property type="match status" value="1"/>
</dbReference>
<dbReference type="HAMAP" id="MF_00592">
    <property type="entry name" value="DeoC_type2"/>
    <property type="match status" value="1"/>
</dbReference>
<dbReference type="InterPro" id="IPR013785">
    <property type="entry name" value="Aldolase_TIM"/>
</dbReference>
<dbReference type="InterPro" id="IPR011343">
    <property type="entry name" value="DeoC"/>
</dbReference>
<dbReference type="InterPro" id="IPR002915">
    <property type="entry name" value="DeoC/FbaB/LacD_aldolase"/>
</dbReference>
<dbReference type="InterPro" id="IPR023649">
    <property type="entry name" value="DeoC_typeII"/>
</dbReference>
<dbReference type="NCBIfam" id="TIGR00126">
    <property type="entry name" value="deoC"/>
    <property type="match status" value="1"/>
</dbReference>
<dbReference type="PANTHER" id="PTHR10889">
    <property type="entry name" value="DEOXYRIBOSE-PHOSPHATE ALDOLASE"/>
    <property type="match status" value="1"/>
</dbReference>
<dbReference type="PANTHER" id="PTHR10889:SF3">
    <property type="entry name" value="DEOXYRIBOSE-PHOSPHATE ALDOLASE"/>
    <property type="match status" value="1"/>
</dbReference>
<dbReference type="Pfam" id="PF01791">
    <property type="entry name" value="DeoC"/>
    <property type="match status" value="1"/>
</dbReference>
<dbReference type="PIRSF" id="PIRSF001357">
    <property type="entry name" value="DeoC"/>
    <property type="match status" value="1"/>
</dbReference>
<dbReference type="SMART" id="SM01133">
    <property type="entry name" value="DeoC"/>
    <property type="match status" value="1"/>
</dbReference>
<dbReference type="SUPFAM" id="SSF51569">
    <property type="entry name" value="Aldolase"/>
    <property type="match status" value="1"/>
</dbReference>
<organism>
    <name type="scientific">Aliivibrio salmonicida (strain LFI1238)</name>
    <name type="common">Vibrio salmonicida (strain LFI1238)</name>
    <dbReference type="NCBI Taxonomy" id="316275"/>
    <lineage>
        <taxon>Bacteria</taxon>
        <taxon>Pseudomonadati</taxon>
        <taxon>Pseudomonadota</taxon>
        <taxon>Gammaproteobacteria</taxon>
        <taxon>Vibrionales</taxon>
        <taxon>Vibrionaceae</taxon>
        <taxon>Aliivibrio</taxon>
    </lineage>
</organism>
<sequence>MSDLKAAALRALKLMDLTTLNDNDTDEAVIALCKNAKTAVGNTAAVCIYPRFVPIAKKTLREQGTPDVRIATVTNFPHGNDDIAIAVAETKAAVAYGADEVDVVFPYRALIAGNETVGFELVKQCKEACGDILLKVIIETGELKEEALIKKTSQICIEAGANFIKTSTGKVPVNATPEYARMMLEVIRDMGVAKTVGFKPAGGVRTAEDAQAYLAMADDILGGDWADNMHYRFGASSLLTNLLNTLEVTAETADPSAY</sequence>
<feature type="chain" id="PRO_1000129798" description="Deoxyribose-phosphate aldolase">
    <location>
        <begin position="1"/>
        <end position="258"/>
    </location>
</feature>
<feature type="active site" description="Proton donor/acceptor" evidence="1">
    <location>
        <position position="102"/>
    </location>
</feature>
<feature type="active site" description="Schiff-base intermediate with acetaldehyde" evidence="1">
    <location>
        <position position="165"/>
    </location>
</feature>
<feature type="active site" description="Proton donor/acceptor" evidence="1">
    <location>
        <position position="199"/>
    </location>
</feature>
<reference key="1">
    <citation type="journal article" date="2008" name="BMC Genomics">
        <title>The genome sequence of the fish pathogen Aliivibrio salmonicida strain LFI1238 shows extensive evidence of gene decay.</title>
        <authorList>
            <person name="Hjerde E."/>
            <person name="Lorentzen M.S."/>
            <person name="Holden M.T."/>
            <person name="Seeger K."/>
            <person name="Paulsen S."/>
            <person name="Bason N."/>
            <person name="Churcher C."/>
            <person name="Harris D."/>
            <person name="Norbertczak H."/>
            <person name="Quail M.A."/>
            <person name="Sanders S."/>
            <person name="Thurston S."/>
            <person name="Parkhill J."/>
            <person name="Willassen N.P."/>
            <person name="Thomson N.R."/>
        </authorList>
    </citation>
    <scope>NUCLEOTIDE SEQUENCE [LARGE SCALE GENOMIC DNA]</scope>
    <source>
        <strain>LFI1238</strain>
    </source>
</reference>